<sequence length="224" mass="25340">MNTLNDEAVVERIDKSLARSRVYSLLAIGLGFPDVESHAGFSDGRLMIEMHQALEVCMPGLAEYFSEQIAPRLKLTCSFEDFEALFLTAFETNMPVPSAALYEGVHVQQSNRPGLILELKGFYRNFGLTMDAQGNELEDTLTAELEFMHFLTAKQAQAEMESLSPNAYQRAQRDFLERHLVVWLPLVRAEVNAKVATQFFVALIDLAERFVDAHLEEMLFELNS</sequence>
<comment type="function">
    <text>May function as a system-specific molybdenum chaperone protein essential for the assembly of the perchlorate reductase PcrAB complex prior to its periplasmic translocation via the Tat pathway.</text>
</comment>
<comment type="subcellular location">
    <subcellularLocation>
        <location evidence="1">Cytoplasm</location>
    </subcellularLocation>
</comment>
<comment type="similarity">
    <text evidence="2">Belongs to the type II DMSO reductase enzyme chaperone family.</text>
</comment>
<comment type="sequence caution" evidence="2">
    <conflict type="erroneous initiation">
        <sequence resource="EMBL-CDS" id="AAZ47312"/>
    </conflict>
    <text>Extended N-terminus.</text>
</comment>
<protein>
    <recommendedName>
        <fullName>Perchlorate reductase assembly chaperone protein</fullName>
    </recommendedName>
</protein>
<name>PCRD_DECAR</name>
<gene>
    <name type="primary">pcrD</name>
    <name type="ordered locus">Daro_2581</name>
</gene>
<evidence type="ECO:0000250" key="1"/>
<evidence type="ECO:0000305" key="2"/>
<keyword id="KW-0143">Chaperone</keyword>
<keyword id="KW-0963">Cytoplasm</keyword>
<proteinExistence type="inferred from homology"/>
<feature type="chain" id="PRO_0000422922" description="Perchlorate reductase assembly chaperone protein">
    <location>
        <begin position="1"/>
        <end position="224"/>
    </location>
</feature>
<organism>
    <name type="scientific">Dechloromonas aromatica (strain RCB)</name>
    <dbReference type="NCBI Taxonomy" id="159087"/>
    <lineage>
        <taxon>Bacteria</taxon>
        <taxon>Pseudomonadati</taxon>
        <taxon>Pseudomonadota</taxon>
        <taxon>Betaproteobacteria</taxon>
        <taxon>Rhodocyclales</taxon>
        <taxon>Azonexaceae</taxon>
        <taxon>Dechloromonas</taxon>
    </lineage>
</organism>
<dbReference type="EMBL" id="CP000089">
    <property type="protein sequence ID" value="AAZ47312.1"/>
    <property type="status" value="ALT_INIT"/>
    <property type="molecule type" value="Genomic_DNA"/>
</dbReference>
<dbReference type="STRING" id="159087.Daro_2581"/>
<dbReference type="KEGG" id="dar:Daro_2581"/>
<dbReference type="eggNOG" id="COG3381">
    <property type="taxonomic scope" value="Bacteria"/>
</dbReference>
<dbReference type="HOGENOM" id="CLU_1232968_0_0_4"/>
<dbReference type="OrthoDB" id="6358994at2"/>
<dbReference type="GO" id="GO:0005737">
    <property type="term" value="C:cytoplasm"/>
    <property type="evidence" value="ECO:0007669"/>
    <property type="project" value="UniProtKB-SubCell"/>
</dbReference>
<dbReference type="Gene3D" id="1.10.3480.10">
    <property type="entry name" value="TorD-like"/>
    <property type="match status" value="1"/>
</dbReference>
<dbReference type="InterPro" id="IPR020945">
    <property type="entry name" value="DMSO/NO3_reduct_chaperone"/>
</dbReference>
<dbReference type="InterPro" id="IPR017843">
    <property type="entry name" value="DMSO_Rdtase_II_chaperone"/>
</dbReference>
<dbReference type="InterPro" id="IPR036411">
    <property type="entry name" value="TorD-like_sf"/>
</dbReference>
<dbReference type="InterPro" id="IPR050289">
    <property type="entry name" value="TorD/DmsD_chaperones"/>
</dbReference>
<dbReference type="NCBIfam" id="TIGR03482">
    <property type="entry name" value="DMSO_red_II_cha"/>
    <property type="match status" value="1"/>
</dbReference>
<dbReference type="PANTHER" id="PTHR34227">
    <property type="entry name" value="CHAPERONE PROTEIN YCDY"/>
    <property type="match status" value="1"/>
</dbReference>
<dbReference type="PANTHER" id="PTHR34227:SF1">
    <property type="entry name" value="DIMETHYL SULFOXIDE REDUCTASE CHAPERONE-RELATED"/>
    <property type="match status" value="1"/>
</dbReference>
<dbReference type="Pfam" id="PF02613">
    <property type="entry name" value="Nitrate_red_del"/>
    <property type="match status" value="1"/>
</dbReference>
<dbReference type="SUPFAM" id="SSF89155">
    <property type="entry name" value="TorD-like"/>
    <property type="match status" value="1"/>
</dbReference>
<reference key="1">
    <citation type="journal article" date="2009" name="BMC Genomics">
        <title>Metabolic analysis of the soil microbe Dechloromonas aromatica str. RCB: indications of a surprisingly complex life-style and cryptic anaerobic pathways for aromatic degradation.</title>
        <authorList>
            <person name="Salinero K.K."/>
            <person name="Keller K."/>
            <person name="Feil W.S."/>
            <person name="Feil H."/>
            <person name="Trong S."/>
            <person name="Di Bartolo G."/>
            <person name="Lapidus A."/>
        </authorList>
    </citation>
    <scope>NUCLEOTIDE SEQUENCE [LARGE SCALE GENOMIC DNA]</scope>
    <source>
        <strain>RCB</strain>
    </source>
</reference>
<reference key="2">
    <citation type="journal article" date="2005" name="J. Bacteriol.">
        <title>Identification, characterization, and classification of genes encoding perchlorate reductase.</title>
        <authorList>
            <person name="Bender K.S."/>
            <person name="Shang C."/>
            <person name="Chakraborty R."/>
            <person name="Belchik S.M."/>
            <person name="Coates J.D."/>
            <person name="Achenbach L.A."/>
        </authorList>
    </citation>
    <scope>IDENTIFICATION</scope>
    <scope>GENE NAME</scope>
    <scope>PREDICTED FUNCTION</scope>
</reference>
<accession>Q47CW9</accession>